<sequence>MKLIASNKKAYFDYEILETLEAGLVLLGSEVKALRQTRVNLKDNFVKIIKGEAFLFGVHISYLDTIHAYYKPNERRERKLLLHKKQLLKWQIEASKERLSIVGLKLYFNQRNRAKIQIALVKGKKLHDKRQNLKEKALNKEILADLKHHFKG</sequence>
<keyword id="KW-0963">Cytoplasm</keyword>
<keyword id="KW-0694">RNA-binding</keyword>
<comment type="function">
    <text evidence="1">Required for rescue of stalled ribosomes mediated by trans-translation. Binds to transfer-messenger RNA (tmRNA), required for stable association of tmRNA with ribosomes. tmRNA and SmpB together mimic tRNA shape, replacing the anticodon stem-loop with SmpB. tmRNA is encoded by the ssrA gene; the 2 termini fold to resemble tRNA(Ala) and it encodes a 'tag peptide', a short internal open reading frame. During trans-translation Ala-aminoacylated tmRNA acts like a tRNA, entering the A-site of stalled ribosomes, displacing the stalled mRNA. The ribosome then switches to translate the ORF on the tmRNA; the nascent peptide is terminated with the 'tag peptide' encoded by the tmRNA and targeted for degradation. The ribosome is freed to recommence translation, which seems to be the essential function of trans-translation.</text>
</comment>
<comment type="subcellular location">
    <subcellularLocation>
        <location evidence="1">Cytoplasm</location>
    </subcellularLocation>
    <text evidence="1">The tmRNA-SmpB complex associates with stalled 70S ribosomes.</text>
</comment>
<comment type="similarity">
    <text evidence="1">Belongs to the SmpB family.</text>
</comment>
<accession>Q17ZA0</accession>
<evidence type="ECO:0000255" key="1">
    <source>
        <dbReference type="HAMAP-Rule" id="MF_00023"/>
    </source>
</evidence>
<feature type="chain" id="PRO_1000002067" description="SsrA-binding protein">
    <location>
        <begin position="1"/>
        <end position="152"/>
    </location>
</feature>
<proteinExistence type="inferred from homology"/>
<organism>
    <name type="scientific">Helicobacter acinonychis (strain Sheeba)</name>
    <dbReference type="NCBI Taxonomy" id="382638"/>
    <lineage>
        <taxon>Bacteria</taxon>
        <taxon>Pseudomonadati</taxon>
        <taxon>Campylobacterota</taxon>
        <taxon>Epsilonproteobacteria</taxon>
        <taxon>Campylobacterales</taxon>
        <taxon>Helicobacteraceae</taxon>
        <taxon>Helicobacter</taxon>
    </lineage>
</organism>
<dbReference type="EMBL" id="AM260522">
    <property type="protein sequence ID" value="CAJ99026.1"/>
    <property type="molecule type" value="Genomic_DNA"/>
</dbReference>
<dbReference type="RefSeq" id="WP_011577142.1">
    <property type="nucleotide sequence ID" value="NC_008229.1"/>
</dbReference>
<dbReference type="SMR" id="Q17ZA0"/>
<dbReference type="STRING" id="382638.Hac_0174"/>
<dbReference type="GeneID" id="31757705"/>
<dbReference type="KEGG" id="hac:Hac_0174"/>
<dbReference type="eggNOG" id="COG0691">
    <property type="taxonomic scope" value="Bacteria"/>
</dbReference>
<dbReference type="HOGENOM" id="CLU_108953_3_1_7"/>
<dbReference type="OrthoDB" id="9805462at2"/>
<dbReference type="BioCyc" id="HACI382638:HAC_RS00780-MONOMER"/>
<dbReference type="Proteomes" id="UP000000775">
    <property type="component" value="Chromosome"/>
</dbReference>
<dbReference type="GO" id="GO:0005829">
    <property type="term" value="C:cytosol"/>
    <property type="evidence" value="ECO:0007669"/>
    <property type="project" value="TreeGrafter"/>
</dbReference>
<dbReference type="GO" id="GO:0003723">
    <property type="term" value="F:RNA binding"/>
    <property type="evidence" value="ECO:0007669"/>
    <property type="project" value="UniProtKB-UniRule"/>
</dbReference>
<dbReference type="GO" id="GO:0070929">
    <property type="term" value="P:trans-translation"/>
    <property type="evidence" value="ECO:0007669"/>
    <property type="project" value="UniProtKB-UniRule"/>
</dbReference>
<dbReference type="CDD" id="cd09294">
    <property type="entry name" value="SmpB"/>
    <property type="match status" value="1"/>
</dbReference>
<dbReference type="Gene3D" id="2.40.280.10">
    <property type="match status" value="1"/>
</dbReference>
<dbReference type="HAMAP" id="MF_00023">
    <property type="entry name" value="SmpB"/>
    <property type="match status" value="1"/>
</dbReference>
<dbReference type="InterPro" id="IPR023620">
    <property type="entry name" value="SmpB"/>
</dbReference>
<dbReference type="InterPro" id="IPR000037">
    <property type="entry name" value="SsrA-bd_prot"/>
</dbReference>
<dbReference type="InterPro" id="IPR020081">
    <property type="entry name" value="SsrA-bd_prot_CS"/>
</dbReference>
<dbReference type="NCBIfam" id="NF003843">
    <property type="entry name" value="PRK05422.1"/>
    <property type="match status" value="1"/>
</dbReference>
<dbReference type="NCBIfam" id="TIGR00086">
    <property type="entry name" value="smpB"/>
    <property type="match status" value="1"/>
</dbReference>
<dbReference type="PANTHER" id="PTHR30308:SF2">
    <property type="entry name" value="SSRA-BINDING PROTEIN"/>
    <property type="match status" value="1"/>
</dbReference>
<dbReference type="PANTHER" id="PTHR30308">
    <property type="entry name" value="TMRNA-BINDING COMPONENT OF TRANS-TRANSLATION TAGGING COMPLEX"/>
    <property type="match status" value="1"/>
</dbReference>
<dbReference type="Pfam" id="PF01668">
    <property type="entry name" value="SmpB"/>
    <property type="match status" value="1"/>
</dbReference>
<dbReference type="SUPFAM" id="SSF74982">
    <property type="entry name" value="Small protein B (SmpB)"/>
    <property type="match status" value="1"/>
</dbReference>
<dbReference type="PROSITE" id="PS01317">
    <property type="entry name" value="SSRP"/>
    <property type="match status" value="1"/>
</dbReference>
<protein>
    <recommendedName>
        <fullName evidence="1">SsrA-binding protein</fullName>
    </recommendedName>
    <alternativeName>
        <fullName evidence="1">Small protein B</fullName>
    </alternativeName>
</protein>
<reference key="1">
    <citation type="journal article" date="2006" name="PLoS Genet.">
        <title>Who ate whom? Adaptive Helicobacter genomic changes that accompanied a host jump from early humans to large felines.</title>
        <authorList>
            <person name="Eppinger M."/>
            <person name="Baar C."/>
            <person name="Linz B."/>
            <person name="Raddatz G."/>
            <person name="Lanz C."/>
            <person name="Keller H."/>
            <person name="Morelli G."/>
            <person name="Gressmann H."/>
            <person name="Achtman M."/>
            <person name="Schuster S.C."/>
        </authorList>
    </citation>
    <scope>NUCLEOTIDE SEQUENCE [LARGE SCALE GENOMIC DNA]</scope>
    <source>
        <strain>Sheeba</strain>
    </source>
</reference>
<gene>
    <name evidence="1" type="primary">smpB</name>
    <name type="ordered locus">Hac_0174</name>
</gene>
<name>SSRP_HELAH</name>